<keyword id="KW-0521">NADP</keyword>
<keyword id="KW-0560">Oxidoreductase</keyword>
<keyword id="KW-1185">Reference proteome</keyword>
<gene>
    <name type="ORF">ARMGADRAFT_1048226</name>
</gene>
<reference key="1">
    <citation type="journal article" date="2017" name="Nat. Ecol. Evol.">
        <title>Genome expansion and lineage-specific genetic innovations in the forest pathogenic fungi Armillaria.</title>
        <authorList>
            <person name="Sipos G."/>
            <person name="Prasanna A.N."/>
            <person name="Walter M.C."/>
            <person name="O'Connor E."/>
            <person name="Balint B."/>
            <person name="Krizsan K."/>
            <person name="Kiss B."/>
            <person name="Hess J."/>
            <person name="Varga T."/>
            <person name="Slot J."/>
            <person name="Riley R."/>
            <person name="Boka B."/>
            <person name="Rigling D."/>
            <person name="Barry K."/>
            <person name="Lee J."/>
            <person name="Mihaltcheva S."/>
            <person name="LaButti K."/>
            <person name="Lipzen A."/>
            <person name="Waldron R."/>
            <person name="Moloney N.M."/>
            <person name="Sperisen C."/>
            <person name="Kredics L."/>
            <person name="Vagvoelgyi C."/>
            <person name="Patrignani A."/>
            <person name="Fitzpatrick D."/>
            <person name="Nagy I."/>
            <person name="Doyle S."/>
            <person name="Anderson J.B."/>
            <person name="Grigoriev I.V."/>
            <person name="Gueldener U."/>
            <person name="Muensterkoetter M."/>
            <person name="Nagy L.G."/>
        </authorList>
    </citation>
    <scope>NUCLEOTIDE SEQUENCE [LARGE SCALE GENOMIC DNA]</scope>
    <source>
        <strain>Ar21-2</strain>
    </source>
</reference>
<reference key="2">
    <citation type="journal article" date="2011" name="Bioorg. Med. Chem. Lett.">
        <title>In vitro cytotoxicity of melleolide antibiotics: structural and mechanistic aspects.</title>
        <authorList>
            <person name="Bohnert M."/>
            <person name="Miethbauer S."/>
            <person name="Dahse H.M."/>
            <person name="Ziemen J."/>
            <person name="Nett M."/>
            <person name="Hoffmeister D."/>
        </authorList>
    </citation>
    <scope>BIOTECHNOLOGY</scope>
</reference>
<reference key="3">
    <citation type="journal article" date="2011" name="J. Biol. Chem.">
        <title>Cloning and characterization of an Armillaria gallica cDNA encoding protoilludene synthase, which catalyzes the first committed step in the synthesis of antimicrobial melleolides.</title>
        <authorList>
            <person name="Engels B."/>
            <person name="Heinig U."/>
            <person name="Grothe T."/>
            <person name="Stadler M."/>
            <person name="Jennewein S."/>
        </authorList>
    </citation>
    <scope>FUNCTION</scope>
    <source>
        <strain>FU02472</strain>
    </source>
</reference>
<reference key="4">
    <citation type="journal article" date="2013" name="Evid. Based Complement Alternat. Med.">
        <title>Therapeutic and radiosensitizing effects of armillaridin on human esophageal cancer cells.</title>
        <authorList>
            <person name="Chi C.W."/>
            <person name="Chen C.C."/>
            <person name="Chen Y.J."/>
        </authorList>
    </citation>
    <scope>BIOTECHNOLOGY</scope>
</reference>
<reference key="5">
    <citation type="journal article" date="2015" name="Int. J. Med. Mushrooms">
        <title>Armillaridin, a honey medicinal mushroom, Armillaria mellea (higher basidiomycetes) component, inhibits differentiation and activation of human macrophages.</title>
        <authorList>
            <person name="Liu T.P."/>
            <person name="Chen C.C."/>
            <person name="Shiao P.Y."/>
            <person name="Shieh H.R."/>
            <person name="Chen Y.Y."/>
            <person name="Chen Y.J."/>
        </authorList>
    </citation>
    <scope>BIOTECHNOLOGY</scope>
</reference>
<reference key="6">
    <citation type="journal article" date="2016" name="J. Ethnopharmacol.">
        <title>Structure, cytotoxic activity and mechanism of protoilludane sesquiterpene aryl esters from the mycelium of Armillaria mellea.</title>
        <authorList>
            <person name="Li Z."/>
            <person name="Wang Y."/>
            <person name="Jiang B."/>
            <person name="Li W."/>
            <person name="Zheng L."/>
            <person name="Yang X."/>
            <person name="Bao Y."/>
            <person name="Sun L."/>
            <person name="Huang Y."/>
            <person name="Li Y."/>
        </authorList>
    </citation>
    <scope>BIOTECHNOLOGY</scope>
</reference>
<reference key="7">
    <citation type="journal article" date="2016" name="Tumor Biol.">
        <title>Armillaridin induces autophagy-associated cell death in human chronic myelogenous leukemia K562 cells.</title>
        <authorList>
            <person name="Chang W.H."/>
            <person name="Huang H.L."/>
            <person name="Huang W.P."/>
            <person name="Chen C.C."/>
            <person name="Chen Y.J."/>
        </authorList>
    </citation>
    <scope>BIOTECHNOLOGY</scope>
</reference>
<reference key="8">
    <citation type="journal article" date="2018" name="Curr. Biol.">
        <title>Armillaria.</title>
        <authorList>
            <person name="Sipos G."/>
            <person name="Anderson J.B."/>
            <person name="Nagy L.G."/>
        </authorList>
    </citation>
    <scope>MISCELLANEOUS</scope>
</reference>
<reference key="9">
    <citation type="journal article" date="2018" name="Proc. R. Soc. B">
        <title>Clonal evolution and genome stability in a 2500-year-old fungal individual.</title>
        <authorList>
            <person name="Anderson J.B."/>
            <person name="Bruhn J.N."/>
            <person name="Kasimer D."/>
            <person name="Wang H."/>
            <person name="Rodrigue N."/>
            <person name="Smith M.L."/>
        </authorList>
    </citation>
    <scope>MISCELLANEOUS</scope>
</reference>
<reference key="10">
    <citation type="journal article" date="2019" name="Am. J. Chin. Med.">
        <title>Induction of autophagic death of human hepatocellular carcinoma cells by armillaridin from Armillaria mellea.</title>
        <authorList>
            <person name="Leu Y.S."/>
            <person name="Chen Y.J."/>
            <person name="Chen C.C."/>
            <person name="Huang H.L."/>
        </authorList>
    </citation>
    <scope>BIOTECHNOLOGY</scope>
</reference>
<reference key="11">
    <citation type="journal article" date="2020" name="Plant Dis.">
        <title>Susceptibility of garden trees and shrubs to Armillaria root rot.</title>
        <authorList>
            <person name="Cromey M.G."/>
            <person name="Drakulic J."/>
            <person name="Beal E.J."/>
            <person name="Waghorn I.A.G."/>
            <person name="Perry J.N."/>
            <person name="Clover G.R.G."/>
        </authorList>
    </citation>
    <scope>MISCELLANEOUS</scope>
</reference>
<sequence length="309" mass="34088">MGNVWSLTSQMFPPKPKWTVDDMPDLTGKVVIVTGGNTGCGKESVRVLLLHGAKVYLAARSEGKAKEAIEDLKKETGHEAIFLPLDLADLVSVRRGAEEFLSKEKQLHILFNNAGVMLSPMEMLTKQGYDLQFGTNVIGHFHFTKLVLPALLAAATPTEKARVITTSSSANYMGTLNFDLWADGPARNKKAPGDMYVQSKHGNVVFAVELARRYGAQNIISHSLNPGSIRTDLQRHLSPFANKMQDIFLFPVSMGALTQLWAGTSPEAGQMNGEFMIPWARLGKARKETGDPEVGKKLWEWLEAQCKDY</sequence>
<accession>A0A2H3CNT9</accession>
<proteinExistence type="evidence at protein level"/>
<dbReference type="EC" id="1.1.1.-" evidence="5"/>
<dbReference type="EMBL" id="KZ293696">
    <property type="protein sequence ID" value="PBK84749.1"/>
    <property type="molecule type" value="Genomic_DNA"/>
</dbReference>
<dbReference type="SMR" id="A0A2H3CNT9"/>
<dbReference type="FunCoup" id="A0A2H3CNT9">
    <property type="interactions" value="174"/>
</dbReference>
<dbReference type="STRING" id="47427.A0A2H3CNT9"/>
<dbReference type="InParanoid" id="A0A2H3CNT9"/>
<dbReference type="OMA" id="NYLTTHK"/>
<dbReference type="OrthoDB" id="191139at2759"/>
<dbReference type="Proteomes" id="UP000217790">
    <property type="component" value="Unassembled WGS sequence"/>
</dbReference>
<dbReference type="GO" id="GO:0016491">
    <property type="term" value="F:oxidoreductase activity"/>
    <property type="evidence" value="ECO:0007669"/>
    <property type="project" value="UniProtKB-KW"/>
</dbReference>
<dbReference type="Gene3D" id="3.40.50.720">
    <property type="entry name" value="NAD(P)-binding Rossmann-like Domain"/>
    <property type="match status" value="1"/>
</dbReference>
<dbReference type="InterPro" id="IPR036291">
    <property type="entry name" value="NAD(P)-bd_dom_sf"/>
</dbReference>
<dbReference type="InterPro" id="IPR002347">
    <property type="entry name" value="SDR_fam"/>
</dbReference>
<dbReference type="PANTHER" id="PTHR24320">
    <property type="entry name" value="RETINOL DEHYDROGENASE"/>
    <property type="match status" value="1"/>
</dbReference>
<dbReference type="PANTHER" id="PTHR24320:SF236">
    <property type="entry name" value="SHORT-CHAIN DEHYDROGENASE-RELATED"/>
    <property type="match status" value="1"/>
</dbReference>
<dbReference type="Pfam" id="PF00106">
    <property type="entry name" value="adh_short"/>
    <property type="match status" value="1"/>
</dbReference>
<dbReference type="PRINTS" id="PR00081">
    <property type="entry name" value="GDHRDH"/>
</dbReference>
<dbReference type="SUPFAM" id="SSF51735">
    <property type="entry name" value="NAD(P)-binding Rossmann-fold domains"/>
    <property type="match status" value="1"/>
</dbReference>
<organism>
    <name type="scientific">Armillaria gallica</name>
    <name type="common">Bulbous honey fungus</name>
    <name type="synonym">Armillaria bulbosa</name>
    <dbReference type="NCBI Taxonomy" id="47427"/>
    <lineage>
        <taxon>Eukaryota</taxon>
        <taxon>Fungi</taxon>
        <taxon>Dikarya</taxon>
        <taxon>Basidiomycota</taxon>
        <taxon>Agaricomycotina</taxon>
        <taxon>Agaricomycetes</taxon>
        <taxon>Agaricomycetidae</taxon>
        <taxon>Agaricales</taxon>
        <taxon>Marasmiineae</taxon>
        <taxon>Physalacriaceae</taxon>
        <taxon>Armillaria</taxon>
    </lineage>
</organism>
<evidence type="ECO:0000250" key="1">
    <source>
        <dbReference type="UniProtKB" id="I3ZNU9"/>
    </source>
</evidence>
<evidence type="ECO:0000250" key="2">
    <source>
        <dbReference type="UniProtKB" id="L0E2Z4"/>
    </source>
</evidence>
<evidence type="ECO:0000250" key="3">
    <source>
        <dbReference type="UniProtKB" id="O93868"/>
    </source>
</evidence>
<evidence type="ECO:0000255" key="4">
    <source>
        <dbReference type="PROSITE-ProRule" id="PRU10001"/>
    </source>
</evidence>
<evidence type="ECO:0000269" key="5">
    <source>
    </source>
</evidence>
<evidence type="ECO:0000269" key="6">
    <source>
    </source>
</evidence>
<evidence type="ECO:0000269" key="7">
    <source>
    </source>
</evidence>
<evidence type="ECO:0000269" key="8">
    <source>
    </source>
</evidence>
<evidence type="ECO:0000269" key="9">
    <source>
    </source>
</evidence>
<evidence type="ECO:0000269" key="10">
    <source>
    </source>
</evidence>
<evidence type="ECO:0000269" key="11">
    <source>
    </source>
</evidence>
<evidence type="ECO:0000269" key="12">
    <source>
    </source>
</evidence>
<evidence type="ECO:0000269" key="13">
    <source>
    </source>
</evidence>
<evidence type="ECO:0000303" key="14">
    <source>
    </source>
</evidence>
<evidence type="ECO:0000305" key="15"/>
<evidence type="ECO:0000305" key="16">
    <source>
    </source>
</evidence>
<protein>
    <recommendedName>
        <fullName evidence="14">Short-chain dehydrogenase/reductase ARMGADRAFT_1048226</fullName>
        <ecNumber evidence="5">1.1.1.-</ecNumber>
    </recommendedName>
    <alternativeName>
        <fullName>Melleolides biosynthesis cluster protein ARMGADRAFT_1048226</fullName>
    </alternativeName>
</protein>
<name>ARMD3_ARMGA</name>
<comment type="function">
    <text evidence="1 5 15">Short-chain dehydrogenase/reductase, part of the gene cluster that mediates the biosynthesis of melleolides, a range of antifungal and phytotoxic polyketide derivatives composed of an orsellinic acid (OA) moiety esterified to various sesquiterpene alcohols (Probable). The first step in melleolides biosynthesis is performed by the delta(6)-protoilludene synthase PRO1 which catalyzes the cyclization of farnesyl diphosphate to protoilludene (PubMed:21148562). The orsellinic acid synthase armB produces OA by condensing acetyl-CoA with 3 malonyl-CoA units in a three-round chain elongation reaction folowed by a C2-C7 ring closure (By similarity). ArmB further catalyzes the trans-esterification of OA to the various sesquiterpene alcohols resulting from the hydroxylation of protoilludene (By similarity). The melleolides cluster also includes 5 cytochrome P450 monooxygenases, 4 NAD(+)-dependent oxidoreductases, one flavin-dependent oxidoreductase, and one O-methyltransferase (By similarity). The cytochrome P450 monooxygenases may be involved in protoilludene hydroxylation to elaborate melleolides with multiple alcohol groups, such as melleolide D, which carries alcohol functionalities at C-4, C-5, C-10, and C-13 (By similarity). The role of the NAD(+)-dependent enzymes remains unknown (By similarity). Numerous melleolides, including arnamial, show 5'-O-methylation of the aromatic moiety which may be catalyzed by the methyltransferase encoded in the cluster (By similarity). The flavin-dependent oxidoreductase might represent the dehydrogenase yielding the aldehyde in position 1 of arnamial and other melleolides (By similarity). Finally, several halogenase localized outside of the cluster, are able to catalyze the transfer of a single chlorine atom to the melleolide backbone, resulting in a 6'-chloromelleolide product (By similarity).</text>
</comment>
<comment type="pathway">
    <text evidence="15">Secondary metabolite biosynthesis.</text>
</comment>
<comment type="biotechnology">
    <text evidence="6 7 8 9 10 12">Melleolide sesquiterpene aryl esters are cytotoxic secondary products with anti-cancer potential (PubMed:21376582, PubMed:26952552). Armillaridin shows therapeutic and radiosensitizing effects on human esophageal cancer cells (PubMed:23864890). Armillaridin induces autophagy-associated cell death in human chronic myelogenous leukemia as well as of hepatocellular carcinoma cells (PubMed:27592257, PubMed:31488037). Armillaridin can also inhibit the differentiation and activation of human macrophages and thus might have potential to be developed as a biological response modifier for inflammatory diseases (PubMed:25746621).</text>
</comment>
<comment type="miscellaneous">
    <text evidence="11 13 16">Armillaria species are both devastating forest pathogens and some of the largest and oldest terrestrial organisms on Earth (Probable) (PubMed:31746694). They forage for hosts and achieve immense colony sizes via rhizomorphs, root-like multicellular structures of clonal dispersal (Probable). One genetic Armillaria gallica individual localized in Michigan's Upper Peninsula stands out as exceptionally large, covering hundreds of tree root systems over approximately 75 hectares of the forest floor (PubMed:30963893). Based on observed growth rates of the fungus, the minimum age of this large individual can be estimated as 2500 years (PubMed:30963893).</text>
</comment>
<comment type="similarity">
    <text evidence="15">Belongs to the short-chain dehydrogenases/reductases (SDR) family.</text>
</comment>
<feature type="chain" id="PRO_0000449405" description="Short-chain dehydrogenase/reductase ARMGADRAFT_1048226">
    <location>
        <begin position="1"/>
        <end position="309"/>
    </location>
</feature>
<feature type="active site" description="Proton donor" evidence="3">
    <location>
        <position position="167"/>
    </location>
</feature>
<feature type="active site" description="Proton acceptor" evidence="4">
    <location>
        <position position="196"/>
    </location>
</feature>
<feature type="active site" description="Lowers pKa of active site Tyr" evidence="3">
    <location>
        <position position="200"/>
    </location>
</feature>
<feature type="binding site" evidence="2">
    <location>
        <position position="64"/>
    </location>
    <ligand>
        <name>NADP(+)</name>
        <dbReference type="ChEBI" id="CHEBI:58349"/>
    </ligand>
</feature>
<feature type="binding site" evidence="2">
    <location>
        <position position="86"/>
    </location>
    <ligand>
        <name>NADP(+)</name>
        <dbReference type="ChEBI" id="CHEBI:58349"/>
    </ligand>
</feature>
<feature type="binding site" evidence="3">
    <location>
        <position position="113"/>
    </location>
    <ligand>
        <name>NADP(+)</name>
        <dbReference type="ChEBI" id="CHEBI:58349"/>
    </ligand>
</feature>
<feature type="binding site" evidence="2">
    <location>
        <position position="145"/>
    </location>
    <ligand>
        <name>NADP(+)</name>
        <dbReference type="ChEBI" id="CHEBI:58349"/>
    </ligand>
</feature>
<feature type="binding site" evidence="3">
    <location>
        <position position="196"/>
    </location>
    <ligand>
        <name>NADP(+)</name>
        <dbReference type="ChEBI" id="CHEBI:58349"/>
    </ligand>
</feature>
<feature type="binding site" evidence="3">
    <location>
        <position position="200"/>
    </location>
    <ligand>
        <name>NADP(+)</name>
        <dbReference type="ChEBI" id="CHEBI:58349"/>
    </ligand>
</feature>